<name>RL21_LIMRD</name>
<protein>
    <recommendedName>
        <fullName evidence="1">Large ribosomal subunit protein bL21</fullName>
    </recommendedName>
    <alternativeName>
        <fullName evidence="3">50S ribosomal protein L21</fullName>
    </alternativeName>
</protein>
<keyword id="KW-1185">Reference proteome</keyword>
<keyword id="KW-0687">Ribonucleoprotein</keyword>
<keyword id="KW-0689">Ribosomal protein</keyword>
<keyword id="KW-0694">RNA-binding</keyword>
<keyword id="KW-0699">rRNA-binding</keyword>
<accession>A5VKS5</accession>
<gene>
    <name evidence="1" type="primary">rplU</name>
    <name type="ordered locus">Lreu_1192</name>
</gene>
<reference key="1">
    <citation type="journal article" date="2011" name="PLoS Genet.">
        <title>The evolution of host specialization in the vertebrate gut symbiont Lactobacillus reuteri.</title>
        <authorList>
            <person name="Frese S.A."/>
            <person name="Benson A.K."/>
            <person name="Tannock G.W."/>
            <person name="Loach D.M."/>
            <person name="Kim J."/>
            <person name="Zhang M."/>
            <person name="Oh P.L."/>
            <person name="Heng N.C."/>
            <person name="Patil P.B."/>
            <person name="Juge N."/>
            <person name="Mackenzie D.A."/>
            <person name="Pearson B.M."/>
            <person name="Lapidus A."/>
            <person name="Dalin E."/>
            <person name="Tice H."/>
            <person name="Goltsman E."/>
            <person name="Land M."/>
            <person name="Hauser L."/>
            <person name="Ivanova N."/>
            <person name="Kyrpides N.C."/>
            <person name="Walter J."/>
        </authorList>
    </citation>
    <scope>NUCLEOTIDE SEQUENCE [LARGE SCALE GENOMIC DNA]</scope>
    <source>
        <strain>DSM 20016</strain>
    </source>
</reference>
<comment type="function">
    <text evidence="1">This protein binds to 23S rRNA in the presence of protein L20.</text>
</comment>
<comment type="subunit">
    <text evidence="1">Part of the 50S ribosomal subunit. Contacts protein L20.</text>
</comment>
<comment type="similarity">
    <text evidence="1">Belongs to the bacterial ribosomal protein bL21 family.</text>
</comment>
<feature type="chain" id="PRO_1000067848" description="Large ribosomal subunit protein bL21">
    <location>
        <begin position="1"/>
        <end position="102"/>
    </location>
</feature>
<feature type="region of interest" description="Disordered" evidence="2">
    <location>
        <begin position="77"/>
        <end position="102"/>
    </location>
</feature>
<feature type="compositionally biased region" description="Basic residues" evidence="2">
    <location>
        <begin position="77"/>
        <end position="88"/>
    </location>
</feature>
<feature type="compositionally biased region" description="Polar residues" evidence="2">
    <location>
        <begin position="93"/>
        <end position="102"/>
    </location>
</feature>
<organism>
    <name type="scientific">Limosilactobacillus reuteri (strain DSM 20016)</name>
    <name type="common">Lactobacillus reuteri</name>
    <dbReference type="NCBI Taxonomy" id="557436"/>
    <lineage>
        <taxon>Bacteria</taxon>
        <taxon>Bacillati</taxon>
        <taxon>Bacillota</taxon>
        <taxon>Bacilli</taxon>
        <taxon>Lactobacillales</taxon>
        <taxon>Lactobacillaceae</taxon>
        <taxon>Limosilactobacillus</taxon>
    </lineage>
</organism>
<proteinExistence type="inferred from homology"/>
<evidence type="ECO:0000255" key="1">
    <source>
        <dbReference type="HAMAP-Rule" id="MF_01363"/>
    </source>
</evidence>
<evidence type="ECO:0000256" key="2">
    <source>
        <dbReference type="SAM" id="MobiDB-lite"/>
    </source>
</evidence>
<evidence type="ECO:0000305" key="3"/>
<dbReference type="EMBL" id="CP000705">
    <property type="protein sequence ID" value="ABQ83449.1"/>
    <property type="molecule type" value="Genomic_DNA"/>
</dbReference>
<dbReference type="RefSeq" id="WP_003664009.1">
    <property type="nucleotide sequence ID" value="NZ_AZDD01000001.1"/>
</dbReference>
<dbReference type="SMR" id="A5VKS5"/>
<dbReference type="STRING" id="557436.Lreu_1192"/>
<dbReference type="GeneID" id="77191861"/>
<dbReference type="KEGG" id="lre:Lreu_1192"/>
<dbReference type="PATRIC" id="fig|557436.17.peg.58"/>
<dbReference type="eggNOG" id="COG0261">
    <property type="taxonomic scope" value="Bacteria"/>
</dbReference>
<dbReference type="HOGENOM" id="CLU_061463_3_1_9"/>
<dbReference type="Proteomes" id="UP000001991">
    <property type="component" value="Chromosome"/>
</dbReference>
<dbReference type="GO" id="GO:0005737">
    <property type="term" value="C:cytoplasm"/>
    <property type="evidence" value="ECO:0007669"/>
    <property type="project" value="UniProtKB-ARBA"/>
</dbReference>
<dbReference type="GO" id="GO:1990904">
    <property type="term" value="C:ribonucleoprotein complex"/>
    <property type="evidence" value="ECO:0007669"/>
    <property type="project" value="UniProtKB-KW"/>
</dbReference>
<dbReference type="GO" id="GO:0005840">
    <property type="term" value="C:ribosome"/>
    <property type="evidence" value="ECO:0007669"/>
    <property type="project" value="UniProtKB-KW"/>
</dbReference>
<dbReference type="GO" id="GO:0019843">
    <property type="term" value="F:rRNA binding"/>
    <property type="evidence" value="ECO:0007669"/>
    <property type="project" value="UniProtKB-UniRule"/>
</dbReference>
<dbReference type="GO" id="GO:0003735">
    <property type="term" value="F:structural constituent of ribosome"/>
    <property type="evidence" value="ECO:0007669"/>
    <property type="project" value="InterPro"/>
</dbReference>
<dbReference type="GO" id="GO:0006412">
    <property type="term" value="P:translation"/>
    <property type="evidence" value="ECO:0007669"/>
    <property type="project" value="UniProtKB-UniRule"/>
</dbReference>
<dbReference type="HAMAP" id="MF_01363">
    <property type="entry name" value="Ribosomal_bL21"/>
    <property type="match status" value="1"/>
</dbReference>
<dbReference type="InterPro" id="IPR028909">
    <property type="entry name" value="bL21-like"/>
</dbReference>
<dbReference type="InterPro" id="IPR036164">
    <property type="entry name" value="bL21-like_sf"/>
</dbReference>
<dbReference type="InterPro" id="IPR001787">
    <property type="entry name" value="Ribosomal_bL21"/>
</dbReference>
<dbReference type="InterPro" id="IPR018258">
    <property type="entry name" value="Ribosomal_bL21_CS"/>
</dbReference>
<dbReference type="NCBIfam" id="TIGR00061">
    <property type="entry name" value="L21"/>
    <property type="match status" value="1"/>
</dbReference>
<dbReference type="PANTHER" id="PTHR21349">
    <property type="entry name" value="50S RIBOSOMAL PROTEIN L21"/>
    <property type="match status" value="1"/>
</dbReference>
<dbReference type="PANTHER" id="PTHR21349:SF0">
    <property type="entry name" value="LARGE RIBOSOMAL SUBUNIT PROTEIN BL21M"/>
    <property type="match status" value="1"/>
</dbReference>
<dbReference type="Pfam" id="PF00829">
    <property type="entry name" value="Ribosomal_L21p"/>
    <property type="match status" value="1"/>
</dbReference>
<dbReference type="SUPFAM" id="SSF141091">
    <property type="entry name" value="L21p-like"/>
    <property type="match status" value="1"/>
</dbReference>
<dbReference type="PROSITE" id="PS01169">
    <property type="entry name" value="RIBOSOMAL_L21"/>
    <property type="match status" value="1"/>
</dbReference>
<sequence length="102" mass="11256">MYAIIVTGGKQYKVEEGASIYVEKLDAKEGDKVTFDQVIFVGGDDTKIGTPVVDGASVEGTVDKQGKEKKVVTFKYKPKKHTHTKQGHRQPYTKVTINKINA</sequence>